<accession>Q7Z3B0</accession>
<accession>B9EJC4</accession>
<keyword id="KW-0175">Coiled coil</keyword>
<keyword id="KW-0472">Membrane</keyword>
<keyword id="KW-1267">Proteomics identification</keyword>
<keyword id="KW-1185">Reference proteome</keyword>
<keyword id="KW-0812">Transmembrane</keyword>
<keyword id="KW-1133">Transmembrane helix</keyword>
<comment type="subcellular location">
    <subcellularLocation>
        <location evidence="3">Membrane</location>
        <topology evidence="3">Single-pass membrane protein</topology>
    </subcellularLocation>
</comment>
<comment type="similarity">
    <text evidence="3">Belongs to the SMIM15 family.</text>
</comment>
<evidence type="ECO:0000255" key="1"/>
<evidence type="ECO:0000256" key="2">
    <source>
        <dbReference type="SAM" id="MobiDB-lite"/>
    </source>
</evidence>
<evidence type="ECO:0000305" key="3"/>
<name>SIM15_HUMAN</name>
<gene>
    <name type="primary">SMIM15</name>
    <name type="synonym">C5orf43</name>
</gene>
<organism>
    <name type="scientific">Homo sapiens</name>
    <name type="common">Human</name>
    <dbReference type="NCBI Taxonomy" id="9606"/>
    <lineage>
        <taxon>Eukaryota</taxon>
        <taxon>Metazoa</taxon>
        <taxon>Chordata</taxon>
        <taxon>Craniata</taxon>
        <taxon>Vertebrata</taxon>
        <taxon>Euteleostomi</taxon>
        <taxon>Mammalia</taxon>
        <taxon>Eutheria</taxon>
        <taxon>Euarchontoglires</taxon>
        <taxon>Primates</taxon>
        <taxon>Haplorrhini</taxon>
        <taxon>Catarrhini</taxon>
        <taxon>Hominidae</taxon>
        <taxon>Homo</taxon>
    </lineage>
</organism>
<proteinExistence type="evidence at protein level"/>
<feature type="chain" id="PRO_0000326075" description="Small integral membrane protein 15">
    <location>
        <begin position="1"/>
        <end position="74"/>
    </location>
</feature>
<feature type="transmembrane region" description="Helical" evidence="1">
    <location>
        <begin position="20"/>
        <end position="40"/>
    </location>
</feature>
<feature type="region of interest" description="Disordered" evidence="2">
    <location>
        <begin position="55"/>
        <end position="74"/>
    </location>
</feature>
<feature type="coiled-coil region" evidence="1">
    <location>
        <begin position="42"/>
        <end position="74"/>
    </location>
</feature>
<feature type="compositionally biased region" description="Basic and acidic residues" evidence="2">
    <location>
        <begin position="55"/>
        <end position="66"/>
    </location>
</feature>
<feature type="sequence variant" id="VAR_039986" description="In dbSNP:rs4546328.">
    <original>L</original>
    <variation>F</variation>
    <location>
        <position position="23"/>
    </location>
</feature>
<dbReference type="EMBL" id="AK291180">
    <property type="protein sequence ID" value="BAF83869.1"/>
    <property type="molecule type" value="mRNA"/>
</dbReference>
<dbReference type="EMBL" id="BX538015">
    <property type="protein sequence ID" value="CAD97962.1"/>
    <property type="molecule type" value="mRNA"/>
</dbReference>
<dbReference type="EMBL" id="CH471123">
    <property type="protein sequence ID" value="EAW55009.1"/>
    <property type="molecule type" value="Genomic_DNA"/>
</dbReference>
<dbReference type="EMBL" id="BC146876">
    <property type="protein sequence ID" value="AAI46877.1"/>
    <property type="molecule type" value="mRNA"/>
</dbReference>
<dbReference type="EMBL" id="BC146881">
    <property type="protein sequence ID" value="AAI46882.1"/>
    <property type="molecule type" value="mRNA"/>
</dbReference>
<dbReference type="CCDS" id="CCDS34165.1"/>
<dbReference type="RefSeq" id="NP_001041714.1">
    <property type="nucleotide sequence ID" value="NM_001048249.4"/>
</dbReference>
<dbReference type="SMR" id="Q7Z3B0"/>
<dbReference type="BioGRID" id="568548">
    <property type="interactions" value="1"/>
</dbReference>
<dbReference type="FunCoup" id="Q7Z3B0">
    <property type="interactions" value="1228"/>
</dbReference>
<dbReference type="IntAct" id="Q7Z3B0">
    <property type="interactions" value="1"/>
</dbReference>
<dbReference type="STRING" id="9606.ENSP00000339324"/>
<dbReference type="iPTMnet" id="Q7Z3B0"/>
<dbReference type="PhosphoSitePlus" id="Q7Z3B0"/>
<dbReference type="BioMuta" id="SMIM15"/>
<dbReference type="DMDM" id="74713347"/>
<dbReference type="jPOST" id="Q7Z3B0"/>
<dbReference type="MassIVE" id="Q7Z3B0"/>
<dbReference type="PaxDb" id="9606-ENSP00000339324"/>
<dbReference type="PeptideAtlas" id="Q7Z3B0"/>
<dbReference type="ProteomicsDB" id="69020"/>
<dbReference type="Pumba" id="Q7Z3B0"/>
<dbReference type="TopDownProteomics" id="Q7Z3B0"/>
<dbReference type="DNASU" id="643155"/>
<dbReference type="Ensembl" id="ENST00000339020.8">
    <property type="protein sequence ID" value="ENSP00000339324.3"/>
    <property type="gene ID" value="ENSG00000188725.8"/>
</dbReference>
<dbReference type="Ensembl" id="ENST00000507416.1">
    <property type="protein sequence ID" value="ENSP00000421336.1"/>
    <property type="gene ID" value="ENSG00000188725.8"/>
</dbReference>
<dbReference type="GeneID" id="643155"/>
<dbReference type="KEGG" id="hsa:643155"/>
<dbReference type="MANE-Select" id="ENST00000339020.8">
    <property type="protein sequence ID" value="ENSP00000339324.3"/>
    <property type="RefSeq nucleotide sequence ID" value="NM_001048249.4"/>
    <property type="RefSeq protein sequence ID" value="NP_001041714.1"/>
</dbReference>
<dbReference type="UCSC" id="uc010iwm.2">
    <property type="organism name" value="human"/>
</dbReference>
<dbReference type="AGR" id="HGNC:33861"/>
<dbReference type="CTD" id="643155"/>
<dbReference type="GeneCards" id="SMIM15"/>
<dbReference type="HGNC" id="HGNC:33861">
    <property type="gene designation" value="SMIM15"/>
</dbReference>
<dbReference type="HPA" id="ENSG00000188725">
    <property type="expression patterns" value="Low tissue specificity"/>
</dbReference>
<dbReference type="neXtProt" id="NX_Q7Z3B0"/>
<dbReference type="OpenTargets" id="ENSG00000188725"/>
<dbReference type="PharmGKB" id="PA162380269"/>
<dbReference type="VEuPathDB" id="HostDB:ENSG00000188725"/>
<dbReference type="eggNOG" id="ENOG502SDBQ">
    <property type="taxonomic scope" value="Eukaryota"/>
</dbReference>
<dbReference type="GeneTree" id="ENSGT00390000008903"/>
<dbReference type="HOGENOM" id="CLU_2687094_0_0_1"/>
<dbReference type="InParanoid" id="Q7Z3B0"/>
<dbReference type="OMA" id="MIDFRAW"/>
<dbReference type="OrthoDB" id="6282848at2759"/>
<dbReference type="PAN-GO" id="Q7Z3B0">
    <property type="GO annotations" value="0 GO annotations based on evolutionary models"/>
</dbReference>
<dbReference type="PhylomeDB" id="Q7Z3B0"/>
<dbReference type="TreeFam" id="TF328386"/>
<dbReference type="PathwayCommons" id="Q7Z3B0"/>
<dbReference type="SignaLink" id="Q7Z3B0"/>
<dbReference type="BioGRID-ORCS" id="643155">
    <property type="hits" value="7 hits in 1108 CRISPR screens"/>
</dbReference>
<dbReference type="ChiTaRS" id="SMIM15">
    <property type="organism name" value="human"/>
</dbReference>
<dbReference type="GenomeRNAi" id="643155"/>
<dbReference type="Pharos" id="Q7Z3B0">
    <property type="development level" value="Tdark"/>
</dbReference>
<dbReference type="PRO" id="PR:Q7Z3B0"/>
<dbReference type="Proteomes" id="UP000005640">
    <property type="component" value="Chromosome 5"/>
</dbReference>
<dbReference type="RNAct" id="Q7Z3B0">
    <property type="molecule type" value="protein"/>
</dbReference>
<dbReference type="Bgee" id="ENSG00000188725">
    <property type="expression patterns" value="Expressed in ileal mucosa and 196 other cell types or tissues"/>
</dbReference>
<dbReference type="GO" id="GO:0016020">
    <property type="term" value="C:membrane"/>
    <property type="evidence" value="ECO:0007669"/>
    <property type="project" value="UniProtKB-SubCell"/>
</dbReference>
<dbReference type="InterPro" id="IPR027877">
    <property type="entry name" value="Smim15"/>
</dbReference>
<dbReference type="PANTHER" id="PTHR28644">
    <property type="entry name" value="SMALL INTEGRAL MEMBRANE PROTEIN 15"/>
    <property type="match status" value="1"/>
</dbReference>
<dbReference type="PANTHER" id="PTHR28644:SF1">
    <property type="entry name" value="SMALL INTEGRAL MEMBRANE PROTEIN 15"/>
    <property type="match status" value="1"/>
</dbReference>
<dbReference type="Pfam" id="PF15086">
    <property type="entry name" value="UPF0542"/>
    <property type="match status" value="1"/>
</dbReference>
<sequence>MFDIKAWAEYVVEWAAKDPYGFLTTVILALTPLFLASAVLSWKLAKMIEAREKEQKKKQKRQENIAKAKRLKKD</sequence>
<protein>
    <recommendedName>
        <fullName>Small integral membrane protein 15</fullName>
    </recommendedName>
</protein>
<reference key="1">
    <citation type="journal article" date="2004" name="Nat. Genet.">
        <title>Complete sequencing and characterization of 21,243 full-length human cDNAs.</title>
        <authorList>
            <person name="Ota T."/>
            <person name="Suzuki Y."/>
            <person name="Nishikawa T."/>
            <person name="Otsuki T."/>
            <person name="Sugiyama T."/>
            <person name="Irie R."/>
            <person name="Wakamatsu A."/>
            <person name="Hayashi K."/>
            <person name="Sato H."/>
            <person name="Nagai K."/>
            <person name="Kimura K."/>
            <person name="Makita H."/>
            <person name="Sekine M."/>
            <person name="Obayashi M."/>
            <person name="Nishi T."/>
            <person name="Shibahara T."/>
            <person name="Tanaka T."/>
            <person name="Ishii S."/>
            <person name="Yamamoto J."/>
            <person name="Saito K."/>
            <person name="Kawai Y."/>
            <person name="Isono Y."/>
            <person name="Nakamura Y."/>
            <person name="Nagahari K."/>
            <person name="Murakami K."/>
            <person name="Yasuda T."/>
            <person name="Iwayanagi T."/>
            <person name="Wagatsuma M."/>
            <person name="Shiratori A."/>
            <person name="Sudo H."/>
            <person name="Hosoiri T."/>
            <person name="Kaku Y."/>
            <person name="Kodaira H."/>
            <person name="Kondo H."/>
            <person name="Sugawara M."/>
            <person name="Takahashi M."/>
            <person name="Kanda K."/>
            <person name="Yokoi T."/>
            <person name="Furuya T."/>
            <person name="Kikkawa E."/>
            <person name="Omura Y."/>
            <person name="Abe K."/>
            <person name="Kamihara K."/>
            <person name="Katsuta N."/>
            <person name="Sato K."/>
            <person name="Tanikawa M."/>
            <person name="Yamazaki M."/>
            <person name="Ninomiya K."/>
            <person name="Ishibashi T."/>
            <person name="Yamashita H."/>
            <person name="Murakawa K."/>
            <person name="Fujimori K."/>
            <person name="Tanai H."/>
            <person name="Kimata M."/>
            <person name="Watanabe M."/>
            <person name="Hiraoka S."/>
            <person name="Chiba Y."/>
            <person name="Ishida S."/>
            <person name="Ono Y."/>
            <person name="Takiguchi S."/>
            <person name="Watanabe S."/>
            <person name="Yosida M."/>
            <person name="Hotuta T."/>
            <person name="Kusano J."/>
            <person name="Kanehori K."/>
            <person name="Takahashi-Fujii A."/>
            <person name="Hara H."/>
            <person name="Tanase T.-O."/>
            <person name="Nomura Y."/>
            <person name="Togiya S."/>
            <person name="Komai F."/>
            <person name="Hara R."/>
            <person name="Takeuchi K."/>
            <person name="Arita M."/>
            <person name="Imose N."/>
            <person name="Musashino K."/>
            <person name="Yuuki H."/>
            <person name="Oshima A."/>
            <person name="Sasaki N."/>
            <person name="Aotsuka S."/>
            <person name="Yoshikawa Y."/>
            <person name="Matsunawa H."/>
            <person name="Ichihara T."/>
            <person name="Shiohata N."/>
            <person name="Sano S."/>
            <person name="Moriya S."/>
            <person name="Momiyama H."/>
            <person name="Satoh N."/>
            <person name="Takami S."/>
            <person name="Terashima Y."/>
            <person name="Suzuki O."/>
            <person name="Nakagawa S."/>
            <person name="Senoh A."/>
            <person name="Mizoguchi H."/>
            <person name="Goto Y."/>
            <person name="Shimizu F."/>
            <person name="Wakebe H."/>
            <person name="Hishigaki H."/>
            <person name="Watanabe T."/>
            <person name="Sugiyama A."/>
            <person name="Takemoto M."/>
            <person name="Kawakami B."/>
            <person name="Yamazaki M."/>
            <person name="Watanabe K."/>
            <person name="Kumagai A."/>
            <person name="Itakura S."/>
            <person name="Fukuzumi Y."/>
            <person name="Fujimori Y."/>
            <person name="Komiyama M."/>
            <person name="Tashiro H."/>
            <person name="Tanigami A."/>
            <person name="Fujiwara T."/>
            <person name="Ono T."/>
            <person name="Yamada K."/>
            <person name="Fujii Y."/>
            <person name="Ozaki K."/>
            <person name="Hirao M."/>
            <person name="Ohmori Y."/>
            <person name="Kawabata A."/>
            <person name="Hikiji T."/>
            <person name="Kobatake N."/>
            <person name="Inagaki H."/>
            <person name="Ikema Y."/>
            <person name="Okamoto S."/>
            <person name="Okitani R."/>
            <person name="Kawakami T."/>
            <person name="Noguchi S."/>
            <person name="Itoh T."/>
            <person name="Shigeta K."/>
            <person name="Senba T."/>
            <person name="Matsumura K."/>
            <person name="Nakajima Y."/>
            <person name="Mizuno T."/>
            <person name="Morinaga M."/>
            <person name="Sasaki M."/>
            <person name="Togashi T."/>
            <person name="Oyama M."/>
            <person name="Hata H."/>
            <person name="Watanabe M."/>
            <person name="Komatsu T."/>
            <person name="Mizushima-Sugano J."/>
            <person name="Satoh T."/>
            <person name="Shirai Y."/>
            <person name="Takahashi Y."/>
            <person name="Nakagawa K."/>
            <person name="Okumura K."/>
            <person name="Nagase T."/>
            <person name="Nomura N."/>
            <person name="Kikuchi H."/>
            <person name="Masuho Y."/>
            <person name="Yamashita R."/>
            <person name="Nakai K."/>
            <person name="Yada T."/>
            <person name="Nakamura Y."/>
            <person name="Ohara O."/>
            <person name="Isogai T."/>
            <person name="Sugano S."/>
        </authorList>
    </citation>
    <scope>NUCLEOTIDE SEQUENCE [LARGE SCALE MRNA]</scope>
    <source>
        <tissue>Teratocarcinoma</tissue>
    </source>
</reference>
<reference key="2">
    <citation type="journal article" date="2007" name="BMC Genomics">
        <title>The full-ORF clone resource of the German cDNA consortium.</title>
        <authorList>
            <person name="Bechtel S."/>
            <person name="Rosenfelder H."/>
            <person name="Duda A."/>
            <person name="Schmidt C.P."/>
            <person name="Ernst U."/>
            <person name="Wellenreuther R."/>
            <person name="Mehrle A."/>
            <person name="Schuster C."/>
            <person name="Bahr A."/>
            <person name="Bloecker H."/>
            <person name="Heubner D."/>
            <person name="Hoerlein A."/>
            <person name="Michel G."/>
            <person name="Wedler H."/>
            <person name="Koehrer K."/>
            <person name="Ottenwaelder B."/>
            <person name="Poustka A."/>
            <person name="Wiemann S."/>
            <person name="Schupp I."/>
        </authorList>
    </citation>
    <scope>NUCLEOTIDE SEQUENCE [LARGE SCALE MRNA]</scope>
    <source>
        <tissue>Endometrium</tissue>
    </source>
</reference>
<reference key="3">
    <citation type="submission" date="2005-07" db="EMBL/GenBank/DDBJ databases">
        <authorList>
            <person name="Mural R.J."/>
            <person name="Istrail S."/>
            <person name="Sutton G.G."/>
            <person name="Florea L."/>
            <person name="Halpern A.L."/>
            <person name="Mobarry C.M."/>
            <person name="Lippert R."/>
            <person name="Walenz B."/>
            <person name="Shatkay H."/>
            <person name="Dew I."/>
            <person name="Miller J.R."/>
            <person name="Flanigan M.J."/>
            <person name="Edwards N.J."/>
            <person name="Bolanos R."/>
            <person name="Fasulo D."/>
            <person name="Halldorsson B.V."/>
            <person name="Hannenhalli S."/>
            <person name="Turner R."/>
            <person name="Yooseph S."/>
            <person name="Lu F."/>
            <person name="Nusskern D.R."/>
            <person name="Shue B.C."/>
            <person name="Zheng X.H."/>
            <person name="Zhong F."/>
            <person name="Delcher A.L."/>
            <person name="Huson D.H."/>
            <person name="Kravitz S.A."/>
            <person name="Mouchard L."/>
            <person name="Reinert K."/>
            <person name="Remington K.A."/>
            <person name="Clark A.G."/>
            <person name="Waterman M.S."/>
            <person name="Eichler E.E."/>
            <person name="Adams M.D."/>
            <person name="Hunkapiller M.W."/>
            <person name="Myers E.W."/>
            <person name="Venter J.C."/>
        </authorList>
    </citation>
    <scope>NUCLEOTIDE SEQUENCE [LARGE SCALE GENOMIC DNA]</scope>
</reference>
<reference key="4">
    <citation type="journal article" date="2004" name="Genome Res.">
        <title>The status, quality, and expansion of the NIH full-length cDNA project: the Mammalian Gene Collection (MGC).</title>
        <authorList>
            <consortium name="The MGC Project Team"/>
        </authorList>
    </citation>
    <scope>NUCLEOTIDE SEQUENCE [LARGE SCALE MRNA]</scope>
    <source>
        <tissue>Brain</tissue>
    </source>
</reference>